<organism>
    <name type="scientific">Klebsiella pneumoniae subsp. pneumoniae (strain ATCC 700721 / MGH 78578)</name>
    <dbReference type="NCBI Taxonomy" id="272620"/>
    <lineage>
        <taxon>Bacteria</taxon>
        <taxon>Pseudomonadati</taxon>
        <taxon>Pseudomonadota</taxon>
        <taxon>Gammaproteobacteria</taxon>
        <taxon>Enterobacterales</taxon>
        <taxon>Enterobacteriaceae</taxon>
        <taxon>Klebsiella/Raoultella group</taxon>
        <taxon>Klebsiella</taxon>
        <taxon>Klebsiella pneumoniae complex</taxon>
    </lineage>
</organism>
<comment type="similarity">
    <text evidence="1">Belongs to the UPF0178 family.</text>
</comment>
<evidence type="ECO:0000255" key="1">
    <source>
        <dbReference type="HAMAP-Rule" id="MF_00489"/>
    </source>
</evidence>
<accession>A6T5B1</accession>
<gene>
    <name type="ordered locus">KPN78578_03210</name>
    <name type="ORF">KPN_00330</name>
</gene>
<proteinExistence type="inferred from homology"/>
<sequence length="152" mass="16859">MAIWVDADACPNVIKEILFRAAERTQTPLTLVANQPLRVPPSRFIRTLRVEQGFDVADNEIVRQCAAGDLVITADIPLAAEVLAKGGAALNPRGERYSEASIRERLTMRDFMETLRASGVQTGGPDSLSQRDRQQFAAELEKWLLAVKRRQG</sequence>
<feature type="chain" id="PRO_1000060448" description="UPF0178 protein KPN78578_03210">
    <location>
        <begin position="1"/>
        <end position="152"/>
    </location>
</feature>
<reference key="1">
    <citation type="submission" date="2006-09" db="EMBL/GenBank/DDBJ databases">
        <authorList>
            <consortium name="The Klebsiella pneumonia Genome Sequencing Project"/>
            <person name="McClelland M."/>
            <person name="Sanderson E.K."/>
            <person name="Spieth J."/>
            <person name="Clifton W.S."/>
            <person name="Latreille P."/>
            <person name="Sabo A."/>
            <person name="Pepin K."/>
            <person name="Bhonagiri V."/>
            <person name="Porwollik S."/>
            <person name="Ali J."/>
            <person name="Wilson R.K."/>
        </authorList>
    </citation>
    <scope>NUCLEOTIDE SEQUENCE [LARGE SCALE GENOMIC DNA]</scope>
    <source>
        <strain>ATCC 700721 / MGH 78578</strain>
    </source>
</reference>
<dbReference type="EMBL" id="CP000647">
    <property type="protein sequence ID" value="ABR75782.1"/>
    <property type="molecule type" value="Genomic_DNA"/>
</dbReference>
<dbReference type="RefSeq" id="WP_011977717.1">
    <property type="nucleotide sequence ID" value="NC_009648.1"/>
</dbReference>
<dbReference type="PaxDb" id="272620-KPN_00330"/>
<dbReference type="EnsemblBacteria" id="ABR75782">
    <property type="protein sequence ID" value="ABR75782"/>
    <property type="gene ID" value="KPN_00330"/>
</dbReference>
<dbReference type="KEGG" id="kpn:KPN_00330"/>
<dbReference type="HOGENOM" id="CLU_106619_1_0_6"/>
<dbReference type="Proteomes" id="UP000000265">
    <property type="component" value="Chromosome"/>
</dbReference>
<dbReference type="CDD" id="cd18720">
    <property type="entry name" value="PIN_YqxD-like"/>
    <property type="match status" value="1"/>
</dbReference>
<dbReference type="HAMAP" id="MF_00489">
    <property type="entry name" value="UPF0178"/>
    <property type="match status" value="1"/>
</dbReference>
<dbReference type="InterPro" id="IPR003791">
    <property type="entry name" value="UPF0178"/>
</dbReference>
<dbReference type="NCBIfam" id="NF001095">
    <property type="entry name" value="PRK00124.1"/>
    <property type="match status" value="1"/>
</dbReference>
<dbReference type="PANTHER" id="PTHR35146">
    <property type="entry name" value="UPF0178 PROTEIN YAII"/>
    <property type="match status" value="1"/>
</dbReference>
<dbReference type="PANTHER" id="PTHR35146:SF1">
    <property type="entry name" value="UPF0178 PROTEIN YAII"/>
    <property type="match status" value="1"/>
</dbReference>
<dbReference type="Pfam" id="PF02639">
    <property type="entry name" value="DUF188"/>
    <property type="match status" value="1"/>
</dbReference>
<name>Y321_KLEP7</name>
<protein>
    <recommendedName>
        <fullName evidence="1">UPF0178 protein KPN78578_03210</fullName>
    </recommendedName>
</protein>